<gene>
    <name evidence="1" type="primary">glgC</name>
    <name type="ordered locus">CD630_08820</name>
</gene>
<comment type="function">
    <text evidence="1">Involved in the biosynthesis of ADP-glucose, a building block required for the elongation reactions to produce glycogen. Catalyzes the reaction between ATP and alpha-D-glucose 1-phosphate (G1P) to produce pyrophosphate and ADP-Glc.</text>
</comment>
<comment type="catalytic activity">
    <reaction evidence="1">
        <text>alpha-D-glucose 1-phosphate + ATP + H(+) = ADP-alpha-D-glucose + diphosphate</text>
        <dbReference type="Rhea" id="RHEA:12120"/>
        <dbReference type="ChEBI" id="CHEBI:15378"/>
        <dbReference type="ChEBI" id="CHEBI:30616"/>
        <dbReference type="ChEBI" id="CHEBI:33019"/>
        <dbReference type="ChEBI" id="CHEBI:57498"/>
        <dbReference type="ChEBI" id="CHEBI:58601"/>
        <dbReference type="EC" id="2.7.7.27"/>
    </reaction>
</comment>
<comment type="pathway">
    <text evidence="1">Glycan biosynthesis; glycogen biosynthesis.</text>
</comment>
<comment type="subunit">
    <text evidence="1">Homotetramer.</text>
</comment>
<comment type="similarity">
    <text evidence="1">Belongs to the bacterial/plant glucose-1-phosphate adenylyltransferase family.</text>
</comment>
<dbReference type="EC" id="2.7.7.27" evidence="1"/>
<dbReference type="EMBL" id="AM180355">
    <property type="protein sequence ID" value="CAJ67715.1"/>
    <property type="molecule type" value="Genomic_DNA"/>
</dbReference>
<dbReference type="RefSeq" id="WP_003418638.1">
    <property type="nucleotide sequence ID" value="NZ_JAUPES010000038.1"/>
</dbReference>
<dbReference type="RefSeq" id="YP_001087356.1">
    <property type="nucleotide sequence ID" value="NC_009089.1"/>
</dbReference>
<dbReference type="SMR" id="Q18A75"/>
<dbReference type="STRING" id="272563.CD630_08820"/>
<dbReference type="EnsemblBacteria" id="CAJ67715">
    <property type="protein sequence ID" value="CAJ67715"/>
    <property type="gene ID" value="CD630_08820"/>
</dbReference>
<dbReference type="KEGG" id="cdf:CD630_08820"/>
<dbReference type="KEGG" id="pdc:CDIF630_01002"/>
<dbReference type="PATRIC" id="fig|272563.120.peg.906"/>
<dbReference type="eggNOG" id="COG0448">
    <property type="taxonomic scope" value="Bacteria"/>
</dbReference>
<dbReference type="OrthoDB" id="9803871at2"/>
<dbReference type="PhylomeDB" id="Q18A75"/>
<dbReference type="BioCyc" id="PDIF272563:G12WB-990-MONOMER"/>
<dbReference type="UniPathway" id="UPA00164"/>
<dbReference type="Proteomes" id="UP000001978">
    <property type="component" value="Chromosome"/>
</dbReference>
<dbReference type="GO" id="GO:0005524">
    <property type="term" value="F:ATP binding"/>
    <property type="evidence" value="ECO:0007669"/>
    <property type="project" value="UniProtKB-KW"/>
</dbReference>
<dbReference type="GO" id="GO:0008878">
    <property type="term" value="F:glucose-1-phosphate adenylyltransferase activity"/>
    <property type="evidence" value="ECO:0007669"/>
    <property type="project" value="UniProtKB-UniRule"/>
</dbReference>
<dbReference type="GO" id="GO:0005978">
    <property type="term" value="P:glycogen biosynthetic process"/>
    <property type="evidence" value="ECO:0007669"/>
    <property type="project" value="UniProtKB-UniRule"/>
</dbReference>
<dbReference type="CDD" id="cd02508">
    <property type="entry name" value="ADP_Glucose_PP"/>
    <property type="match status" value="1"/>
</dbReference>
<dbReference type="CDD" id="cd04651">
    <property type="entry name" value="LbH_G1P_AT_C"/>
    <property type="match status" value="1"/>
</dbReference>
<dbReference type="Gene3D" id="2.160.10.10">
    <property type="entry name" value="Hexapeptide repeat proteins"/>
    <property type="match status" value="1"/>
</dbReference>
<dbReference type="Gene3D" id="3.90.550.10">
    <property type="entry name" value="Spore Coat Polysaccharide Biosynthesis Protein SpsA, Chain A"/>
    <property type="match status" value="1"/>
</dbReference>
<dbReference type="HAMAP" id="MF_00624">
    <property type="entry name" value="GlgC"/>
    <property type="match status" value="1"/>
</dbReference>
<dbReference type="InterPro" id="IPR011831">
    <property type="entry name" value="ADP-Glc_PPase"/>
</dbReference>
<dbReference type="InterPro" id="IPR005836">
    <property type="entry name" value="ADP_Glu_pyroP_CS"/>
</dbReference>
<dbReference type="InterPro" id="IPR023049">
    <property type="entry name" value="GlgC_bac"/>
</dbReference>
<dbReference type="InterPro" id="IPR056818">
    <property type="entry name" value="GlmU/GlgC-like_hexapep"/>
</dbReference>
<dbReference type="InterPro" id="IPR005835">
    <property type="entry name" value="NTP_transferase_dom"/>
</dbReference>
<dbReference type="InterPro" id="IPR029044">
    <property type="entry name" value="Nucleotide-diphossugar_trans"/>
</dbReference>
<dbReference type="InterPro" id="IPR011004">
    <property type="entry name" value="Trimer_LpxA-like_sf"/>
</dbReference>
<dbReference type="NCBIfam" id="TIGR02091">
    <property type="entry name" value="glgC"/>
    <property type="match status" value="1"/>
</dbReference>
<dbReference type="NCBIfam" id="NF003670">
    <property type="entry name" value="PRK05293.1"/>
    <property type="match status" value="1"/>
</dbReference>
<dbReference type="PANTHER" id="PTHR43523:SF2">
    <property type="entry name" value="GLUCOSE-1-PHOSPHATE ADENYLYLTRANSFERASE"/>
    <property type="match status" value="1"/>
</dbReference>
<dbReference type="PANTHER" id="PTHR43523">
    <property type="entry name" value="GLUCOSE-1-PHOSPHATE ADENYLYLTRANSFERASE-RELATED"/>
    <property type="match status" value="1"/>
</dbReference>
<dbReference type="Pfam" id="PF24894">
    <property type="entry name" value="Hexapep_GlmU"/>
    <property type="match status" value="1"/>
</dbReference>
<dbReference type="Pfam" id="PF00483">
    <property type="entry name" value="NTP_transferase"/>
    <property type="match status" value="1"/>
</dbReference>
<dbReference type="SUPFAM" id="SSF53448">
    <property type="entry name" value="Nucleotide-diphospho-sugar transferases"/>
    <property type="match status" value="1"/>
</dbReference>
<dbReference type="SUPFAM" id="SSF51161">
    <property type="entry name" value="Trimeric LpxA-like enzymes"/>
    <property type="match status" value="1"/>
</dbReference>
<dbReference type="PROSITE" id="PS00809">
    <property type="entry name" value="ADP_GLC_PYROPHOSPH_2"/>
    <property type="match status" value="1"/>
</dbReference>
<dbReference type="PROSITE" id="PS00810">
    <property type="entry name" value="ADP_GLC_PYROPHOSPH_3"/>
    <property type="match status" value="1"/>
</dbReference>
<keyword id="KW-0067">ATP-binding</keyword>
<keyword id="KW-0119">Carbohydrate metabolism</keyword>
<keyword id="KW-0320">Glycogen biosynthesis</keyword>
<keyword id="KW-0321">Glycogen metabolism</keyword>
<keyword id="KW-0547">Nucleotide-binding</keyword>
<keyword id="KW-0548">Nucleotidyltransferase</keyword>
<keyword id="KW-1185">Reference proteome</keyword>
<keyword id="KW-0808">Transferase</keyword>
<name>GLGC_CLOD6</name>
<evidence type="ECO:0000255" key="1">
    <source>
        <dbReference type="HAMAP-Rule" id="MF_00624"/>
    </source>
</evidence>
<feature type="chain" id="PRO_0000261861" description="Glucose-1-phosphate adenylyltransferase">
    <location>
        <begin position="1"/>
        <end position="386"/>
    </location>
</feature>
<feature type="binding site" evidence="1">
    <location>
        <position position="99"/>
    </location>
    <ligand>
        <name>alpha-D-glucose 1-phosphate</name>
        <dbReference type="ChEBI" id="CHEBI:58601"/>
    </ligand>
</feature>
<feature type="binding site" evidence="1">
    <location>
        <position position="164"/>
    </location>
    <ligand>
        <name>alpha-D-glucose 1-phosphate</name>
        <dbReference type="ChEBI" id="CHEBI:58601"/>
    </ligand>
</feature>
<feature type="binding site" evidence="1">
    <location>
        <begin position="179"/>
        <end position="180"/>
    </location>
    <ligand>
        <name>alpha-D-glucose 1-phosphate</name>
        <dbReference type="ChEBI" id="CHEBI:58601"/>
    </ligand>
</feature>
<feature type="binding site" evidence="1">
    <location>
        <position position="190"/>
    </location>
    <ligand>
        <name>alpha-D-glucose 1-phosphate</name>
        <dbReference type="ChEBI" id="CHEBI:58601"/>
    </ligand>
</feature>
<proteinExistence type="inferred from homology"/>
<accession>Q18A75</accession>
<sequence length="386" mass="43412">MKKEMLAMILAGGQGSRLGVFTKRIAKPAVSFGGKYRIIDFVLSNCSNSGIDTVGVLTQYRPLILNSHIGMGSHWDLDRINGGVYVLQPFMNEKEGNWYNGTAHAIYQNMDFVDTYNPEYVLILSGDHIYKMDYSKMLKFHKEKGSKATIAVIEVPWDEASRFGIMNTNEDSSIYEFEEKPSEPKSNLASMGVYIFDWKMLRNYFKEAEKNPEINYDDFGKNLIPKMLEDNVGMYAYPFKGYWRDVGTIQSLWDANMDIIKSPETLDLADPKWKIYTNTMAMPPQYIGKNANVHRSMIADGCRILGEVGNSVLSHGVVVGKGSKVIDSVIMPNVVIGENVTIEKAMIGECATINDNVQIKNVNNEINVVSEYENIEPRCVLIEGGL</sequence>
<protein>
    <recommendedName>
        <fullName evidence="1">Glucose-1-phosphate adenylyltransferase</fullName>
        <ecNumber evidence="1">2.7.7.27</ecNumber>
    </recommendedName>
    <alternativeName>
        <fullName evidence="1">ADP-glucose pyrophosphorylase</fullName>
        <shortName evidence="1">ADPGlc PPase</shortName>
    </alternativeName>
    <alternativeName>
        <fullName evidence="1">ADP-glucose synthase</fullName>
    </alternativeName>
</protein>
<organism>
    <name type="scientific">Clostridioides difficile (strain 630)</name>
    <name type="common">Peptoclostridium difficile</name>
    <dbReference type="NCBI Taxonomy" id="272563"/>
    <lineage>
        <taxon>Bacteria</taxon>
        <taxon>Bacillati</taxon>
        <taxon>Bacillota</taxon>
        <taxon>Clostridia</taxon>
        <taxon>Peptostreptococcales</taxon>
        <taxon>Peptostreptococcaceae</taxon>
        <taxon>Clostridioides</taxon>
    </lineage>
</organism>
<reference key="1">
    <citation type="journal article" date="2006" name="Nat. Genet.">
        <title>The multidrug-resistant human pathogen Clostridium difficile has a highly mobile, mosaic genome.</title>
        <authorList>
            <person name="Sebaihia M."/>
            <person name="Wren B.W."/>
            <person name="Mullany P."/>
            <person name="Fairweather N.F."/>
            <person name="Minton N."/>
            <person name="Stabler R."/>
            <person name="Thomson N.R."/>
            <person name="Roberts A.P."/>
            <person name="Cerdeno-Tarraga A.M."/>
            <person name="Wang H."/>
            <person name="Holden M.T.G."/>
            <person name="Wright A."/>
            <person name="Churcher C."/>
            <person name="Quail M.A."/>
            <person name="Baker S."/>
            <person name="Bason N."/>
            <person name="Brooks K."/>
            <person name="Chillingworth T."/>
            <person name="Cronin A."/>
            <person name="Davis P."/>
            <person name="Dowd L."/>
            <person name="Fraser A."/>
            <person name="Feltwell T."/>
            <person name="Hance Z."/>
            <person name="Holroyd S."/>
            <person name="Jagels K."/>
            <person name="Moule S."/>
            <person name="Mungall K."/>
            <person name="Price C."/>
            <person name="Rabbinowitsch E."/>
            <person name="Sharp S."/>
            <person name="Simmonds M."/>
            <person name="Stevens K."/>
            <person name="Unwin L."/>
            <person name="Whithead S."/>
            <person name="Dupuy B."/>
            <person name="Dougan G."/>
            <person name="Barrell B."/>
            <person name="Parkhill J."/>
        </authorList>
    </citation>
    <scope>NUCLEOTIDE SEQUENCE [LARGE SCALE GENOMIC DNA]</scope>
    <source>
        <strain>630</strain>
    </source>
</reference>